<dbReference type="EMBL" id="AF005385">
    <property type="protein sequence ID" value="AAB63376.1"/>
    <property type="molecule type" value="Genomic_DNA"/>
</dbReference>
<dbReference type="SMR" id="O18312"/>
<dbReference type="GlyCosmos" id="O18312">
    <property type="glycosylation" value="1 site, No reported glycans"/>
</dbReference>
<dbReference type="GO" id="GO:0042995">
    <property type="term" value="C:cell projection"/>
    <property type="evidence" value="ECO:0007669"/>
    <property type="project" value="UniProtKB-KW"/>
</dbReference>
<dbReference type="GO" id="GO:0005886">
    <property type="term" value="C:plasma membrane"/>
    <property type="evidence" value="ECO:0000250"/>
    <property type="project" value="UniProtKB"/>
</dbReference>
<dbReference type="GO" id="GO:0004930">
    <property type="term" value="F:G protein-coupled receptor activity"/>
    <property type="evidence" value="ECO:0007669"/>
    <property type="project" value="UniProtKB-KW"/>
</dbReference>
<dbReference type="GO" id="GO:0009881">
    <property type="term" value="F:photoreceptor activity"/>
    <property type="evidence" value="ECO:0007669"/>
    <property type="project" value="UniProtKB-KW"/>
</dbReference>
<dbReference type="GO" id="GO:0007602">
    <property type="term" value="P:phototransduction"/>
    <property type="evidence" value="ECO:0007669"/>
    <property type="project" value="UniProtKB-KW"/>
</dbReference>
<dbReference type="GO" id="GO:0007601">
    <property type="term" value="P:visual perception"/>
    <property type="evidence" value="ECO:0007669"/>
    <property type="project" value="UniProtKB-KW"/>
</dbReference>
<dbReference type="FunFam" id="1.20.1070.10:FF:000044">
    <property type="entry name" value="Opsin, ultraviolet-sensitive"/>
    <property type="match status" value="1"/>
</dbReference>
<dbReference type="Gene3D" id="1.20.1070.10">
    <property type="entry name" value="Rhodopsin 7-helix transmembrane proteins"/>
    <property type="match status" value="1"/>
</dbReference>
<dbReference type="InterPro" id="IPR050125">
    <property type="entry name" value="GPCR_opsins"/>
</dbReference>
<dbReference type="InterPro" id="IPR000276">
    <property type="entry name" value="GPCR_Rhodpsn"/>
</dbReference>
<dbReference type="InterPro" id="IPR017452">
    <property type="entry name" value="GPCR_Rhodpsn_7TM"/>
</dbReference>
<dbReference type="InterPro" id="IPR001760">
    <property type="entry name" value="Opsin"/>
</dbReference>
<dbReference type="InterPro" id="IPR001391">
    <property type="entry name" value="Opsin_lateye"/>
</dbReference>
<dbReference type="InterPro" id="IPR027430">
    <property type="entry name" value="Retinal_BS"/>
</dbReference>
<dbReference type="PANTHER" id="PTHR24240">
    <property type="entry name" value="OPSIN"/>
    <property type="match status" value="1"/>
</dbReference>
<dbReference type="Pfam" id="PF00001">
    <property type="entry name" value="7tm_1"/>
    <property type="match status" value="1"/>
</dbReference>
<dbReference type="PRINTS" id="PR00237">
    <property type="entry name" value="GPCRRHODOPSN"/>
</dbReference>
<dbReference type="PRINTS" id="PR00238">
    <property type="entry name" value="OPSIN"/>
</dbReference>
<dbReference type="PRINTS" id="PR00578">
    <property type="entry name" value="OPSINLTRLEYE"/>
</dbReference>
<dbReference type="SUPFAM" id="SSF81321">
    <property type="entry name" value="Family A G protein-coupled receptor-like"/>
    <property type="match status" value="1"/>
</dbReference>
<dbReference type="PROSITE" id="PS00237">
    <property type="entry name" value="G_PROTEIN_RECEP_F1_1"/>
    <property type="match status" value="1"/>
</dbReference>
<dbReference type="PROSITE" id="PS50262">
    <property type="entry name" value="G_PROTEIN_RECEP_F1_2"/>
    <property type="match status" value="1"/>
</dbReference>
<dbReference type="PROSITE" id="PS00238">
    <property type="entry name" value="OPSIN"/>
    <property type="match status" value="1"/>
</dbReference>
<gene>
    <name type="primary">RHO</name>
</gene>
<keyword id="KW-1003">Cell membrane</keyword>
<keyword id="KW-0966">Cell projection</keyword>
<keyword id="KW-0157">Chromophore</keyword>
<keyword id="KW-1015">Disulfide bond</keyword>
<keyword id="KW-0297">G-protein coupled receptor</keyword>
<keyword id="KW-0325">Glycoprotein</keyword>
<keyword id="KW-0472">Membrane</keyword>
<keyword id="KW-0597">Phosphoprotein</keyword>
<keyword id="KW-0600">Photoreceptor protein</keyword>
<keyword id="KW-0675">Receptor</keyword>
<keyword id="KW-0681">Retinal protein</keyword>
<keyword id="KW-0716">Sensory transduction</keyword>
<keyword id="KW-0807">Transducer</keyword>
<keyword id="KW-0812">Transmembrane</keyword>
<keyword id="KW-1133">Transmembrane helix</keyword>
<keyword id="KW-0844">Vision</keyword>
<accession>O18312</accession>
<name>OPSD_CAMHU</name>
<feature type="chain" id="PRO_0000197737" description="Rhodopsin">
    <location>
        <begin position="1" status="less than"/>
        <end position="301" status="greater than"/>
    </location>
</feature>
<feature type="topological domain" description="Extracellular" evidence="6">
    <location>
        <begin position="1"/>
        <end position="18"/>
    </location>
</feature>
<feature type="transmembrane region" description="Helical; Name=1" evidence="1">
    <location>
        <begin position="19"/>
        <end position="43"/>
    </location>
</feature>
<feature type="topological domain" description="Cytoplasmic" evidence="6">
    <location>
        <begin position="44"/>
        <end position="55"/>
    </location>
</feature>
<feature type="transmembrane region" description="Helical; Name=2" evidence="1">
    <location>
        <begin position="56"/>
        <end position="78"/>
    </location>
</feature>
<feature type="topological domain" description="Extracellular" evidence="6">
    <location>
        <begin position="79"/>
        <end position="92"/>
    </location>
</feature>
<feature type="transmembrane region" description="Helical; Name=3" evidence="1">
    <location>
        <begin position="93"/>
        <end position="115"/>
    </location>
</feature>
<feature type="topological domain" description="Cytoplasmic" evidence="6">
    <location>
        <begin position="116"/>
        <end position="134"/>
    </location>
</feature>
<feature type="transmembrane region" description="Helical; Name=4" evidence="1">
    <location>
        <begin position="135"/>
        <end position="155"/>
    </location>
</feature>
<feature type="topological domain" description="Extracellular" evidence="6">
    <location>
        <begin position="156"/>
        <end position="182"/>
    </location>
</feature>
<feature type="transmembrane region" description="Helical; Name=5" evidence="1">
    <location>
        <begin position="183"/>
        <end position="204"/>
    </location>
</feature>
<feature type="topological domain" description="Cytoplasmic" evidence="6">
    <location>
        <begin position="205"/>
        <end position="245"/>
    </location>
</feature>
<feature type="transmembrane region" description="Helical; Name=6" evidence="1">
    <location>
        <begin position="246"/>
        <end position="267"/>
    </location>
</feature>
<feature type="topological domain" description="Extracellular" evidence="6">
    <location>
        <begin position="268"/>
        <end position="278"/>
    </location>
</feature>
<feature type="transmembrane region" description="Helical; Name=7" evidence="1">
    <location>
        <begin position="279"/>
        <end position="300"/>
    </location>
</feature>
<feature type="short sequence motif" description="'Ionic lock' involved in activated form stabilization" evidence="1">
    <location>
        <begin position="116"/>
        <end position="118"/>
    </location>
</feature>
<feature type="modified residue" description="N6-(retinylidene)lysine" evidence="1">
    <location>
        <position position="288"/>
    </location>
</feature>
<feature type="glycosylation site" description="N-linked (GlcNAc...) asparagine" evidence="4">
    <location>
        <position position="165"/>
    </location>
</feature>
<feature type="disulfide bond" evidence="5">
    <location>
        <begin position="92"/>
        <end position="169"/>
    </location>
</feature>
<feature type="non-terminal residue">
    <location>
        <position position="1"/>
    </location>
</feature>
<feature type="non-terminal residue">
    <location>
        <position position="301"/>
    </location>
</feature>
<comment type="function">
    <text evidence="3">Photoreceptor required for image-forming vision at low light intensity. Can use both retinal and 3-dehydroretinal as visual pigment. Light-induced isomerization of 11-cis to all-trans retinal triggers a conformational change that activates signaling via G-proteins. Signaling via GNAQ probably mediates the activation of phospholipase C.</text>
</comment>
<comment type="subunit">
    <text evidence="3">Homodimer. Interacts with GNAQ.</text>
</comment>
<comment type="subcellular location">
    <subcellularLocation>
        <location evidence="3">Cell projection</location>
        <location evidence="3">Rhabdomere membrane</location>
        <topology evidence="2">Multi-pass membrane protein</topology>
    </subcellularLocation>
</comment>
<comment type="PTM">
    <text evidence="1">Contains one covalently linked retinal chromophore.</text>
</comment>
<comment type="similarity">
    <text evidence="5">Belongs to the G-protein coupled receptor 1 family. Opsin subfamily.</text>
</comment>
<organism>
    <name type="scientific">Cambarus hubrichti</name>
    <name type="common">Salem cave crayfish</name>
    <dbReference type="NCBI Taxonomy" id="61487"/>
    <lineage>
        <taxon>Eukaryota</taxon>
        <taxon>Metazoa</taxon>
        <taxon>Ecdysozoa</taxon>
        <taxon>Arthropoda</taxon>
        <taxon>Crustacea</taxon>
        <taxon>Multicrustacea</taxon>
        <taxon>Malacostraca</taxon>
        <taxon>Eumalacostraca</taxon>
        <taxon>Eucarida</taxon>
        <taxon>Decapoda</taxon>
        <taxon>Pleocyemata</taxon>
        <taxon>Astacidea</taxon>
        <taxon>Astacoidea</taxon>
        <taxon>Cambaridae</taxon>
        <taxon>Cambarus</taxon>
    </lineage>
</organism>
<protein>
    <recommendedName>
        <fullName>Rhodopsin</fullName>
    </recommendedName>
</protein>
<reference key="1">
    <citation type="journal article" date="1997" name="Nature">
        <title>Rhodopsin evolution in the dark.</title>
        <authorList>
            <person name="Crandall K.A."/>
            <person name="Hillis D.M."/>
        </authorList>
    </citation>
    <scope>NUCLEOTIDE SEQUENCE [GENOMIC DNA]</scope>
</reference>
<proteinExistence type="inferred from homology"/>
<evidence type="ECO:0000250" key="1">
    <source>
        <dbReference type="UniProtKB" id="P02699"/>
    </source>
</evidence>
<evidence type="ECO:0000250" key="2">
    <source>
        <dbReference type="UniProtKB" id="P31356"/>
    </source>
</evidence>
<evidence type="ECO:0000250" key="3">
    <source>
        <dbReference type="UniProtKB" id="P35356"/>
    </source>
</evidence>
<evidence type="ECO:0000255" key="4"/>
<evidence type="ECO:0000255" key="5">
    <source>
        <dbReference type="PROSITE-ProRule" id="PRU00521"/>
    </source>
</evidence>
<evidence type="ECO:0000305" key="6"/>
<sequence length="301" mass="34542">LHMIHLHWYQYPPMNPMMYPLLLIFMLFTGILCLAGNFVTIWVFMNTKSLRTPANLLVVNLAMSDFLMMFTMFPPMMVTCYYHTWTLGPTFCQVYAFLGNLCGCASIWTMVFITFDRYNVIVKGVAGEPLSTKKASLWILSVWVLSTAWCIAPFFGWNHYVPEGNLTGCGTDYLSEDILSRSYLYIYSTWVYFLPLAITIYCYVFIIKAVAAHEKGMRDQAKKMGIKSLRNEEAQKTSAECRLAKNAMTTVALWFIAWTPCLLINWVGMFARSYLSPVYTIWGYVFAKANAVYNPIVYAIS</sequence>